<reference key="1">
    <citation type="journal article" date="2006" name="Nature">
        <title>Multiplex amplification of the mammoth mitochondrial genome and the evolution of Elephantidae.</title>
        <authorList>
            <person name="Krause J."/>
            <person name="Dear P.H."/>
            <person name="Pollack J.L."/>
            <person name="Slatkin M."/>
            <person name="Spriggs H."/>
            <person name="Barnes I."/>
            <person name="Lister A.M."/>
            <person name="Ebersberger I."/>
            <person name="Paeaebo S."/>
            <person name="Hofreiter M."/>
        </authorList>
    </citation>
    <scope>NUCLEOTIDE SEQUENCE [GENOMIC DNA]</scope>
</reference>
<reference key="2">
    <citation type="journal article" date="2006" name="PLoS Biol.">
        <title>Complete mitochondrial genome and phylogeny of Pleistocene mammoth Mammuthus primigenius.</title>
        <authorList>
            <person name="Rogaev E.I."/>
            <person name="Moliaka Y.K."/>
            <person name="Malyarchuk B.A."/>
            <person name="Kondrashov F.A."/>
            <person name="Derenko M.V."/>
            <person name="Chumakov I."/>
            <person name="Grigorenko A.P."/>
        </authorList>
    </citation>
    <scope>NUCLEOTIDE SEQUENCE [GENOMIC DNA]</scope>
    <source>
        <tissue>Muscle</tissue>
    </source>
</reference>
<sequence length="515" mass="57091">MFANRWLYSTNHKDIGTLYLLFGAWAGMVGTAFSILIRAELGQPGSLLGDDQIYNVIVTAHAFVMIFFMVMPIMIGGFGNWLIPLMIGAPDMAFPRMNNMSFWLLPPSFLLLLASSMVEAGTGTGWTVYPPLAGNLAHAGASVDLTIFSLHLAGVSSILSAINFITTIINMKPPAMSQYHMPLFVWSILVTAVLLLLSLPVLAAGITMLLTDRNLNTTFFDPAGGGDPILYQHLFWFFGHPEVYILILPGFGMVSHIVTYYSGKKEPFGYMGMVWAMMSIGFLGFIVWAHHMFTVGMDVDTRAYFTSATMIIAIPTGVKVFSWLATLHGGNIKWSPAMMWALGFIFLFTIGGLTGIVLANSSLDIVLHDTYYVVAHFHYVLSMGAVFAIMGGFIHWFPLFSGYTLNHTWAKIQFLVMFIGVNLTFFPQHFLGLSGMPRRYSDYPDAYTAWNTASSMGSFISLVAVILMVFMIWEAFASKREVSVMELTTTNVEWLNGCPPPHHTFEEPAYVKSNS</sequence>
<accession>Q38PS0</accession>
<geneLocation type="mitochondrion"/>
<comment type="function">
    <text evidence="3">Component of the cytochrome c oxidase, the last enzyme in the mitochondrial electron transport chain which drives oxidative phosphorylation. The respiratory chain contains 3 multisubunit complexes succinate dehydrogenase (complex II, CII), ubiquinol-cytochrome c oxidoreductase (cytochrome b-c1 complex, complex III, CIII) and cytochrome c oxidase (complex IV, CIV), that cooperate to transfer electrons derived from NADH and succinate to molecular oxygen, creating an electrochemical gradient over the inner membrane that drives transmembrane transport and the ATP synthase. Cytochrome c oxidase is the component of the respiratory chain that catalyzes the reduction of oxygen to water. Electrons originating from reduced cytochrome c in the intermembrane space (IMS) are transferred via the dinuclear copper A center (CU(A)) of subunit 2 and heme A of subunit 1 to the active site in subunit 1, a binuclear center (BNC) formed by heme A3 and copper B (CU(B)). The BNC reduces molecular oxygen to 2 water molecules using 4 electrons from cytochrome c in the IMS and 4 protons from the mitochondrial matrix.</text>
</comment>
<comment type="catalytic activity">
    <reaction evidence="3">
        <text>4 Fe(II)-[cytochrome c] + O2 + 8 H(+)(in) = 4 Fe(III)-[cytochrome c] + 2 H2O + 4 H(+)(out)</text>
        <dbReference type="Rhea" id="RHEA:11436"/>
        <dbReference type="Rhea" id="RHEA-COMP:10350"/>
        <dbReference type="Rhea" id="RHEA-COMP:14399"/>
        <dbReference type="ChEBI" id="CHEBI:15377"/>
        <dbReference type="ChEBI" id="CHEBI:15378"/>
        <dbReference type="ChEBI" id="CHEBI:15379"/>
        <dbReference type="ChEBI" id="CHEBI:29033"/>
        <dbReference type="ChEBI" id="CHEBI:29034"/>
        <dbReference type="EC" id="7.1.1.9"/>
    </reaction>
    <physiologicalReaction direction="left-to-right" evidence="3">
        <dbReference type="Rhea" id="RHEA:11437"/>
    </physiologicalReaction>
</comment>
<comment type="cofactor">
    <cofactor evidence="2">
        <name>heme</name>
        <dbReference type="ChEBI" id="CHEBI:30413"/>
    </cofactor>
    <text evidence="2">Binds 2 heme A groups non-covalently per subunit.</text>
</comment>
<comment type="cofactor">
    <cofactor evidence="2">
        <name>Cu cation</name>
        <dbReference type="ChEBI" id="CHEBI:23378"/>
    </cofactor>
    <text evidence="2">Binds a copper B center.</text>
</comment>
<comment type="pathway">
    <text evidence="3">Energy metabolism; oxidative phosphorylation.</text>
</comment>
<comment type="subunit">
    <text evidence="1 2">Component of the cytochrome c oxidase (complex IV, CIV), a multisubunit enzyme composed of 14 subunits. The complex is composed of a catalytic core of 3 subunits MT-CO1, MT-CO2 and MT-CO3, encoded in the mitochondrial DNA, and 11 supernumerary subunits COX4I, COX5A, COX5B, COX6A, COX6B, COX6C, COX7A, COX7B, COX7C, COX8 and NDUFA4, which are encoded in the nuclear genome. The complex exists as a monomer or a dimer and forms supercomplexes (SCs) in the inner mitochondrial membrane with NADH-ubiquinone oxidoreductase (complex I, CI) and ubiquinol-cytochrome c oxidoreductase (cytochrome b-c1 complex, complex III, CIII), resulting in different assemblies (supercomplex SCI(1)III(2)IV(1) and megacomplex MCI(2)III(2)IV(2)) (By similarity). As a newly synthesized protein, rapidly incorporates into a multi-subunit assembly intermediate in the inner membrane, called MITRAC (mitochondrial translation regulation assembly intermediate of cytochrome c oxidase) complex, whose core components are COA3/MITRAC12 and COX14. Within the MITRAC complex, interacts with COA3 and with SMIM20/MITRAC7; the interaction with SMIM20 stabilizes the newly synthesized MT-CO1 and prevents its premature turnover. Interacts with TMEM177 in a COX20-dependent manner (By similarity).</text>
</comment>
<comment type="subcellular location">
    <subcellularLocation>
        <location evidence="2">Mitochondrion inner membrane</location>
        <topology evidence="2">Multi-pass membrane protein</topology>
    </subcellularLocation>
</comment>
<comment type="similarity">
    <text evidence="4">Belongs to the heme-copper respiratory oxidase family.</text>
</comment>
<feature type="chain" id="PRO_0000232841" description="Cytochrome c oxidase subunit 1">
    <location>
        <begin position="1"/>
        <end position="515"/>
    </location>
</feature>
<feature type="topological domain" description="Mitochondrial matrix" evidence="2">
    <location>
        <begin position="1"/>
        <end position="11"/>
    </location>
</feature>
<feature type="transmembrane region" description="Helical; Name=I" evidence="2">
    <location>
        <begin position="12"/>
        <end position="40"/>
    </location>
</feature>
<feature type="topological domain" description="Mitochondrial intermembrane" evidence="2">
    <location>
        <begin position="41"/>
        <end position="50"/>
    </location>
</feature>
<feature type="transmembrane region" description="Helical; Name=II" evidence="2">
    <location>
        <begin position="51"/>
        <end position="86"/>
    </location>
</feature>
<feature type="topological domain" description="Mitochondrial matrix" evidence="2">
    <location>
        <begin position="87"/>
        <end position="94"/>
    </location>
</feature>
<feature type="transmembrane region" description="Helical; Name=III" evidence="2">
    <location>
        <begin position="95"/>
        <end position="117"/>
    </location>
</feature>
<feature type="topological domain" description="Mitochondrial intermembrane" evidence="2">
    <location>
        <begin position="118"/>
        <end position="140"/>
    </location>
</feature>
<feature type="transmembrane region" description="Helical; Name=IV" evidence="2">
    <location>
        <begin position="141"/>
        <end position="170"/>
    </location>
</feature>
<feature type="topological domain" description="Mitochondrial matrix" evidence="2">
    <location>
        <begin position="171"/>
        <end position="182"/>
    </location>
</feature>
<feature type="transmembrane region" description="Helical; Name=V" evidence="2">
    <location>
        <begin position="183"/>
        <end position="212"/>
    </location>
</feature>
<feature type="topological domain" description="Mitochondrial intermembrane" evidence="2">
    <location>
        <begin position="213"/>
        <end position="227"/>
    </location>
</feature>
<feature type="transmembrane region" description="Helical; Name=VI" evidence="2">
    <location>
        <begin position="228"/>
        <end position="261"/>
    </location>
</feature>
<feature type="topological domain" description="Mitochondrial matrix" evidence="2">
    <location>
        <begin position="262"/>
        <end position="269"/>
    </location>
</feature>
<feature type="transmembrane region" description="Helical; Name=VII" evidence="2">
    <location>
        <begin position="270"/>
        <end position="286"/>
    </location>
</feature>
<feature type="topological domain" description="Mitochondrial intermembrane" evidence="2">
    <location>
        <begin position="287"/>
        <end position="298"/>
    </location>
</feature>
<feature type="transmembrane region" description="Helical; Name=VIII" evidence="2">
    <location>
        <begin position="299"/>
        <end position="327"/>
    </location>
</feature>
<feature type="topological domain" description="Mitochondrial matrix" evidence="2">
    <location>
        <begin position="328"/>
        <end position="335"/>
    </location>
</feature>
<feature type="transmembrane region" description="Helical; Name=IX" evidence="2">
    <location>
        <begin position="336"/>
        <end position="357"/>
    </location>
</feature>
<feature type="topological domain" description="Mitochondrial intermembrane" evidence="2">
    <location>
        <begin position="358"/>
        <end position="370"/>
    </location>
</feature>
<feature type="transmembrane region" description="Helical; Name=X" evidence="2">
    <location>
        <begin position="371"/>
        <end position="400"/>
    </location>
</feature>
<feature type="topological domain" description="Mitochondrial matrix" evidence="2">
    <location>
        <begin position="401"/>
        <end position="406"/>
    </location>
</feature>
<feature type="transmembrane region" description="Helical; Name=XI" evidence="2">
    <location>
        <begin position="407"/>
        <end position="433"/>
    </location>
</feature>
<feature type="topological domain" description="Mitochondrial intermembrane" evidence="2">
    <location>
        <begin position="434"/>
        <end position="446"/>
    </location>
</feature>
<feature type="transmembrane region" description="Helical; Name=XII" evidence="2">
    <location>
        <begin position="447"/>
        <end position="478"/>
    </location>
</feature>
<feature type="topological domain" description="Mitochondrial matrix" evidence="2">
    <location>
        <begin position="479"/>
        <end position="515"/>
    </location>
</feature>
<feature type="binding site" evidence="2">
    <location>
        <position position="40"/>
    </location>
    <ligand>
        <name>Na(+)</name>
        <dbReference type="ChEBI" id="CHEBI:29101"/>
    </ligand>
</feature>
<feature type="binding site" evidence="2">
    <location>
        <position position="45"/>
    </location>
    <ligand>
        <name>Na(+)</name>
        <dbReference type="ChEBI" id="CHEBI:29101"/>
    </ligand>
</feature>
<feature type="binding site" description="axial binding residue" evidence="2">
    <location>
        <position position="61"/>
    </location>
    <ligand>
        <name>Fe(II)-heme a</name>
        <dbReference type="ChEBI" id="CHEBI:61715"/>
        <note>low-spin</note>
    </ligand>
    <ligandPart>
        <name>Fe</name>
        <dbReference type="ChEBI" id="CHEBI:18248"/>
    </ligandPart>
</feature>
<feature type="binding site" evidence="2">
    <location>
        <position position="240"/>
    </location>
    <ligand>
        <name>Cu cation</name>
        <dbReference type="ChEBI" id="CHEBI:23378"/>
        <label>B</label>
    </ligand>
</feature>
<feature type="binding site" evidence="2">
    <location>
        <position position="244"/>
    </location>
    <ligand>
        <name>O2</name>
        <dbReference type="ChEBI" id="CHEBI:15379"/>
    </ligand>
</feature>
<feature type="binding site" evidence="2">
    <location>
        <position position="290"/>
    </location>
    <ligand>
        <name>Cu cation</name>
        <dbReference type="ChEBI" id="CHEBI:23378"/>
        <label>B</label>
    </ligand>
</feature>
<feature type="binding site" evidence="2">
    <location>
        <position position="291"/>
    </location>
    <ligand>
        <name>Cu cation</name>
        <dbReference type="ChEBI" id="CHEBI:23378"/>
        <label>B</label>
    </ligand>
</feature>
<feature type="binding site" evidence="2">
    <location>
        <position position="368"/>
    </location>
    <ligand>
        <name>Mg(2+)</name>
        <dbReference type="ChEBI" id="CHEBI:18420"/>
        <note>ligand shared with MT-CO2</note>
    </ligand>
</feature>
<feature type="binding site" evidence="2">
    <location>
        <position position="369"/>
    </location>
    <ligand>
        <name>Mg(2+)</name>
        <dbReference type="ChEBI" id="CHEBI:18420"/>
        <note>ligand shared with MT-CO2</note>
    </ligand>
</feature>
<feature type="binding site" description="axial binding residue" evidence="2">
    <location>
        <position position="376"/>
    </location>
    <ligand>
        <name>heme a3</name>
        <dbReference type="ChEBI" id="CHEBI:83282"/>
        <note>high-spin</note>
    </ligand>
    <ligandPart>
        <name>Fe</name>
        <dbReference type="ChEBI" id="CHEBI:18248"/>
    </ligandPart>
</feature>
<feature type="binding site" description="axial binding residue" evidence="2">
    <location>
        <position position="378"/>
    </location>
    <ligand>
        <name>Fe(II)-heme a</name>
        <dbReference type="ChEBI" id="CHEBI:61715"/>
        <note>low-spin</note>
    </ligand>
    <ligandPart>
        <name>Fe</name>
        <dbReference type="ChEBI" id="CHEBI:18248"/>
    </ligandPart>
</feature>
<feature type="binding site" evidence="2">
    <location>
        <position position="441"/>
    </location>
    <ligand>
        <name>Na(+)</name>
        <dbReference type="ChEBI" id="CHEBI:29101"/>
    </ligand>
</feature>
<feature type="cross-link" description="1'-histidyl-3'-tyrosine (His-Tyr)" evidence="2">
    <location>
        <begin position="240"/>
        <end position="244"/>
    </location>
</feature>
<gene>
    <name type="primary">MT-CO1</name>
    <name type="synonym">COI</name>
    <name type="synonym">COXI</name>
    <name type="synonym">MTCO1</name>
</gene>
<protein>
    <recommendedName>
        <fullName>Cytochrome c oxidase subunit 1</fullName>
        <ecNumber>7.1.1.9</ecNumber>
    </recommendedName>
    <alternativeName>
        <fullName>Cytochrome c oxidase polypeptide I</fullName>
    </alternativeName>
</protein>
<keyword id="KW-0106">Calcium</keyword>
<keyword id="KW-0186">Copper</keyword>
<keyword id="KW-0249">Electron transport</keyword>
<keyword id="KW-0952">Extinct organism protein</keyword>
<keyword id="KW-0349">Heme</keyword>
<keyword id="KW-0408">Iron</keyword>
<keyword id="KW-0460">Magnesium</keyword>
<keyword id="KW-0472">Membrane</keyword>
<keyword id="KW-0479">Metal-binding</keyword>
<keyword id="KW-0496">Mitochondrion</keyword>
<keyword id="KW-0999">Mitochondrion inner membrane</keyword>
<keyword id="KW-0679">Respiratory chain</keyword>
<keyword id="KW-0915">Sodium</keyword>
<keyword id="KW-1278">Translocase</keyword>
<keyword id="KW-0812">Transmembrane</keyword>
<keyword id="KW-1133">Transmembrane helix</keyword>
<keyword id="KW-0813">Transport</keyword>
<evidence type="ECO:0000250" key="1">
    <source>
        <dbReference type="UniProtKB" id="P00395"/>
    </source>
</evidence>
<evidence type="ECO:0000250" key="2">
    <source>
        <dbReference type="UniProtKB" id="P00396"/>
    </source>
</evidence>
<evidence type="ECO:0000250" key="3">
    <source>
        <dbReference type="UniProtKB" id="P00401"/>
    </source>
</evidence>
<evidence type="ECO:0000305" key="4"/>
<proteinExistence type="inferred from homology"/>
<name>COX1_MAMPR</name>
<organism>
    <name type="scientific">Mammuthus primigenius</name>
    <name type="common">Siberian woolly mammoth</name>
    <dbReference type="NCBI Taxonomy" id="37349"/>
    <lineage>
        <taxon>Eukaryota</taxon>
        <taxon>Metazoa</taxon>
        <taxon>Chordata</taxon>
        <taxon>Craniata</taxon>
        <taxon>Vertebrata</taxon>
        <taxon>Euteleostomi</taxon>
        <taxon>Mammalia</taxon>
        <taxon>Eutheria</taxon>
        <taxon>Afrotheria</taxon>
        <taxon>Proboscidea</taxon>
        <taxon>Elephantidae</taxon>
        <taxon>Mammuthus</taxon>
    </lineage>
</organism>
<dbReference type="EC" id="7.1.1.9"/>
<dbReference type="EMBL" id="DQ188829">
    <property type="protein sequence ID" value="ABA29786.1"/>
    <property type="molecule type" value="Genomic_DNA"/>
</dbReference>
<dbReference type="EMBL" id="DQ316067">
    <property type="protein sequence ID" value="ABC17880.1"/>
    <property type="molecule type" value="Genomic_DNA"/>
</dbReference>
<dbReference type="SMR" id="Q38PS0"/>
<dbReference type="CTD" id="4512"/>
<dbReference type="UniPathway" id="UPA00705"/>
<dbReference type="GO" id="GO:0005743">
    <property type="term" value="C:mitochondrial inner membrane"/>
    <property type="evidence" value="ECO:0007669"/>
    <property type="project" value="UniProtKB-SubCell"/>
</dbReference>
<dbReference type="GO" id="GO:0045277">
    <property type="term" value="C:respiratory chain complex IV"/>
    <property type="evidence" value="ECO:0000250"/>
    <property type="project" value="UniProtKB"/>
</dbReference>
<dbReference type="GO" id="GO:0004129">
    <property type="term" value="F:cytochrome-c oxidase activity"/>
    <property type="evidence" value="ECO:0007669"/>
    <property type="project" value="UniProtKB-EC"/>
</dbReference>
<dbReference type="GO" id="GO:0020037">
    <property type="term" value="F:heme binding"/>
    <property type="evidence" value="ECO:0007669"/>
    <property type="project" value="InterPro"/>
</dbReference>
<dbReference type="GO" id="GO:0046872">
    <property type="term" value="F:metal ion binding"/>
    <property type="evidence" value="ECO:0007669"/>
    <property type="project" value="UniProtKB-KW"/>
</dbReference>
<dbReference type="GO" id="GO:0015990">
    <property type="term" value="P:electron transport coupled proton transport"/>
    <property type="evidence" value="ECO:0007669"/>
    <property type="project" value="TreeGrafter"/>
</dbReference>
<dbReference type="GO" id="GO:0006123">
    <property type="term" value="P:mitochondrial electron transport, cytochrome c to oxygen"/>
    <property type="evidence" value="ECO:0007669"/>
    <property type="project" value="TreeGrafter"/>
</dbReference>
<dbReference type="CDD" id="cd01663">
    <property type="entry name" value="Cyt_c_Oxidase_I"/>
    <property type="match status" value="1"/>
</dbReference>
<dbReference type="FunFam" id="1.20.210.10:FF:000001">
    <property type="entry name" value="Cytochrome c oxidase subunit 1"/>
    <property type="match status" value="1"/>
</dbReference>
<dbReference type="Gene3D" id="1.20.210.10">
    <property type="entry name" value="Cytochrome c oxidase-like, subunit I domain"/>
    <property type="match status" value="1"/>
</dbReference>
<dbReference type="InterPro" id="IPR023616">
    <property type="entry name" value="Cyt_c_oxase-like_su1_dom"/>
</dbReference>
<dbReference type="InterPro" id="IPR036927">
    <property type="entry name" value="Cyt_c_oxase-like_su1_sf"/>
</dbReference>
<dbReference type="InterPro" id="IPR000883">
    <property type="entry name" value="Cyt_C_Oxase_1"/>
</dbReference>
<dbReference type="InterPro" id="IPR023615">
    <property type="entry name" value="Cyt_c_Oxase_su1_BS"/>
</dbReference>
<dbReference type="InterPro" id="IPR033944">
    <property type="entry name" value="Cyt_c_oxase_su1_dom"/>
</dbReference>
<dbReference type="PANTHER" id="PTHR10422">
    <property type="entry name" value="CYTOCHROME C OXIDASE SUBUNIT 1"/>
    <property type="match status" value="1"/>
</dbReference>
<dbReference type="PANTHER" id="PTHR10422:SF18">
    <property type="entry name" value="CYTOCHROME C OXIDASE SUBUNIT 1"/>
    <property type="match status" value="1"/>
</dbReference>
<dbReference type="Pfam" id="PF00115">
    <property type="entry name" value="COX1"/>
    <property type="match status" value="1"/>
</dbReference>
<dbReference type="PRINTS" id="PR01165">
    <property type="entry name" value="CYCOXIDASEI"/>
</dbReference>
<dbReference type="SUPFAM" id="SSF81442">
    <property type="entry name" value="Cytochrome c oxidase subunit I-like"/>
    <property type="match status" value="1"/>
</dbReference>
<dbReference type="PROSITE" id="PS50855">
    <property type="entry name" value="COX1"/>
    <property type="match status" value="1"/>
</dbReference>
<dbReference type="PROSITE" id="PS00077">
    <property type="entry name" value="COX1_CUB"/>
    <property type="match status" value="1"/>
</dbReference>